<dbReference type="EC" id="3.1.1.29" evidence="1"/>
<dbReference type="EMBL" id="L77117">
    <property type="protein sequence ID" value="AAB98032.1"/>
    <property type="molecule type" value="Genomic_DNA"/>
</dbReference>
<dbReference type="PIR" id="C64306">
    <property type="entry name" value="C64306"/>
</dbReference>
<dbReference type="RefSeq" id="WP_010869543.1">
    <property type="nucleotide sequence ID" value="NC_000909.1"/>
</dbReference>
<dbReference type="PDB" id="2ZV3">
    <property type="method" value="X-ray"/>
    <property type="resolution" value="2.10 A"/>
    <property type="chains" value="A/B/C/D/E/F/G/H/I=1-115"/>
</dbReference>
<dbReference type="PDBsum" id="2ZV3"/>
<dbReference type="SMR" id="Q60363"/>
<dbReference type="FunCoup" id="Q60363">
    <property type="interactions" value="167"/>
</dbReference>
<dbReference type="STRING" id="243232.MJ_0051"/>
<dbReference type="PaxDb" id="243232-MJ_0051"/>
<dbReference type="EnsemblBacteria" id="AAB98032">
    <property type="protein sequence ID" value="AAB98032"/>
    <property type="gene ID" value="MJ_0051"/>
</dbReference>
<dbReference type="GeneID" id="1450890"/>
<dbReference type="KEGG" id="mja:MJ_0051"/>
<dbReference type="eggNOG" id="arCOG04228">
    <property type="taxonomic scope" value="Archaea"/>
</dbReference>
<dbReference type="HOGENOM" id="CLU_073661_2_2_2"/>
<dbReference type="InParanoid" id="Q60363"/>
<dbReference type="PhylomeDB" id="Q60363"/>
<dbReference type="BRENDA" id="3.1.1.29">
    <property type="organism ID" value="3260"/>
</dbReference>
<dbReference type="EvolutionaryTrace" id="Q60363"/>
<dbReference type="Proteomes" id="UP000000805">
    <property type="component" value="Chromosome"/>
</dbReference>
<dbReference type="GO" id="GO:0005829">
    <property type="term" value="C:cytosol"/>
    <property type="evidence" value="ECO:0000318"/>
    <property type="project" value="GO_Central"/>
</dbReference>
<dbReference type="GO" id="GO:0004045">
    <property type="term" value="F:peptidyl-tRNA hydrolase activity"/>
    <property type="evidence" value="ECO:0000318"/>
    <property type="project" value="GO_Central"/>
</dbReference>
<dbReference type="GO" id="GO:0006412">
    <property type="term" value="P:translation"/>
    <property type="evidence" value="ECO:0007669"/>
    <property type="project" value="UniProtKB-UniRule"/>
</dbReference>
<dbReference type="CDD" id="cd02430">
    <property type="entry name" value="PTH2"/>
    <property type="match status" value="1"/>
</dbReference>
<dbReference type="FunFam" id="3.40.1490.10:FF:000001">
    <property type="entry name" value="Peptidyl-tRNA hydrolase 2"/>
    <property type="match status" value="1"/>
</dbReference>
<dbReference type="Gene3D" id="3.40.1490.10">
    <property type="entry name" value="Bit1"/>
    <property type="match status" value="1"/>
</dbReference>
<dbReference type="HAMAP" id="MF_00628">
    <property type="entry name" value="Pept_tRNA_hydro_arch"/>
    <property type="match status" value="1"/>
</dbReference>
<dbReference type="InterPro" id="IPR023476">
    <property type="entry name" value="Pep_tRNA_hydro_II_dom_sf"/>
</dbReference>
<dbReference type="InterPro" id="IPR034759">
    <property type="entry name" value="Pept_tRNA_hydro_arch"/>
</dbReference>
<dbReference type="InterPro" id="IPR002833">
    <property type="entry name" value="PTH2"/>
</dbReference>
<dbReference type="NCBIfam" id="TIGR00283">
    <property type="entry name" value="arch_pth2"/>
    <property type="match status" value="1"/>
</dbReference>
<dbReference type="NCBIfam" id="NF003314">
    <property type="entry name" value="PRK04322.1"/>
    <property type="match status" value="1"/>
</dbReference>
<dbReference type="PANTHER" id="PTHR12649">
    <property type="entry name" value="PEPTIDYL-TRNA HYDROLASE 2"/>
    <property type="match status" value="1"/>
</dbReference>
<dbReference type="PANTHER" id="PTHR12649:SF11">
    <property type="entry name" value="PEPTIDYL-TRNA HYDROLASE 2, MITOCHONDRIAL"/>
    <property type="match status" value="1"/>
</dbReference>
<dbReference type="Pfam" id="PF01981">
    <property type="entry name" value="PTH2"/>
    <property type="match status" value="1"/>
</dbReference>
<dbReference type="SUPFAM" id="SSF102462">
    <property type="entry name" value="Peptidyl-tRNA hydrolase II"/>
    <property type="match status" value="1"/>
</dbReference>
<protein>
    <recommendedName>
        <fullName evidence="1">Peptidyl-tRNA hydrolase</fullName>
        <shortName evidence="1">PTH</shortName>
        <ecNumber evidence="1">3.1.1.29</ecNumber>
    </recommendedName>
</protein>
<organism>
    <name type="scientific">Methanocaldococcus jannaschii (strain ATCC 43067 / DSM 2661 / JAL-1 / JCM 10045 / NBRC 100440)</name>
    <name type="common">Methanococcus jannaschii</name>
    <dbReference type="NCBI Taxonomy" id="243232"/>
    <lineage>
        <taxon>Archaea</taxon>
        <taxon>Methanobacteriati</taxon>
        <taxon>Methanobacteriota</taxon>
        <taxon>Methanomada group</taxon>
        <taxon>Methanococci</taxon>
        <taxon>Methanococcales</taxon>
        <taxon>Methanocaldococcaceae</taxon>
        <taxon>Methanocaldococcus</taxon>
    </lineage>
</organism>
<proteinExistence type="evidence at protein level"/>
<sequence>MKMVVVIRNDLGMGKGKMVAQGGHAIIEAFLDAKRKNPRAVDEWLREGQKKVVVKVNSEKELIDIYNKARSEGLPCSIIRDAGHTQLEPGTLTAVAIGPEKDEKIDKITGHLKLL</sequence>
<evidence type="ECO:0000255" key="1">
    <source>
        <dbReference type="HAMAP-Rule" id="MF_00628"/>
    </source>
</evidence>
<evidence type="ECO:0000269" key="2">
    <source>
    </source>
</evidence>
<evidence type="ECO:0007829" key="3">
    <source>
        <dbReference type="PDB" id="2ZV3"/>
    </source>
</evidence>
<feature type="chain" id="PRO_0000120292" description="Peptidyl-tRNA hydrolase">
    <location>
        <begin position="1"/>
        <end position="115"/>
    </location>
</feature>
<feature type="strand" evidence="3">
    <location>
        <begin position="2"/>
        <end position="11"/>
    </location>
</feature>
<feature type="helix" evidence="3">
    <location>
        <begin position="15"/>
        <end position="36"/>
    </location>
</feature>
<feature type="helix" evidence="3">
    <location>
        <begin position="38"/>
        <end position="46"/>
    </location>
</feature>
<feature type="strand" evidence="3">
    <location>
        <begin position="51"/>
        <end position="58"/>
    </location>
</feature>
<feature type="helix" evidence="3">
    <location>
        <begin position="59"/>
        <end position="72"/>
    </location>
</feature>
<feature type="strand" evidence="3">
    <location>
        <begin position="76"/>
        <end position="81"/>
    </location>
</feature>
<feature type="strand" evidence="3">
    <location>
        <begin position="91"/>
        <end position="100"/>
    </location>
</feature>
<feature type="helix" evidence="3">
    <location>
        <begin position="102"/>
        <end position="109"/>
    </location>
</feature>
<accession>Q60363</accession>
<name>PTH_METJA</name>
<gene>
    <name evidence="1" type="primary">pth</name>
    <name type="synonym">pth2</name>
    <name type="ordered locus">MJ0051</name>
</gene>
<comment type="function">
    <text evidence="1 2">The natural substrate for this enzyme may be peptidyl-tRNAs which drop off the ribosome during protein synthesis.</text>
</comment>
<comment type="catalytic activity">
    <reaction evidence="1">
        <text>an N-acyl-L-alpha-aminoacyl-tRNA + H2O = an N-acyl-L-amino acid + a tRNA + H(+)</text>
        <dbReference type="Rhea" id="RHEA:54448"/>
        <dbReference type="Rhea" id="RHEA-COMP:10123"/>
        <dbReference type="Rhea" id="RHEA-COMP:13883"/>
        <dbReference type="ChEBI" id="CHEBI:15377"/>
        <dbReference type="ChEBI" id="CHEBI:15378"/>
        <dbReference type="ChEBI" id="CHEBI:59874"/>
        <dbReference type="ChEBI" id="CHEBI:78442"/>
        <dbReference type="ChEBI" id="CHEBI:138191"/>
        <dbReference type="EC" id="3.1.1.29"/>
    </reaction>
</comment>
<comment type="subcellular location">
    <subcellularLocation>
        <location>Cytoplasm</location>
    </subcellularLocation>
</comment>
<comment type="similarity">
    <text evidence="1">Belongs to the PTH2 family.</text>
</comment>
<reference key="1">
    <citation type="journal article" date="1996" name="Science">
        <title>Complete genome sequence of the methanogenic archaeon, Methanococcus jannaschii.</title>
        <authorList>
            <person name="Bult C.J."/>
            <person name="White O."/>
            <person name="Olsen G.J."/>
            <person name="Zhou L."/>
            <person name="Fleischmann R.D."/>
            <person name="Sutton G.G."/>
            <person name="Blake J.A."/>
            <person name="FitzGerald L.M."/>
            <person name="Clayton R.A."/>
            <person name="Gocayne J.D."/>
            <person name="Kerlavage A.R."/>
            <person name="Dougherty B.A."/>
            <person name="Tomb J.-F."/>
            <person name="Adams M.D."/>
            <person name="Reich C.I."/>
            <person name="Overbeek R."/>
            <person name="Kirkness E.F."/>
            <person name="Weinstock K.G."/>
            <person name="Merrick J.M."/>
            <person name="Glodek A."/>
            <person name="Scott J.L."/>
            <person name="Geoghagen N.S.M."/>
            <person name="Weidman J.F."/>
            <person name="Fuhrmann J.L."/>
            <person name="Nguyen D."/>
            <person name="Utterback T.R."/>
            <person name="Kelley J.M."/>
            <person name="Peterson J.D."/>
            <person name="Sadow P.W."/>
            <person name="Hanna M.C."/>
            <person name="Cotton M.D."/>
            <person name="Roberts K.M."/>
            <person name="Hurst M.A."/>
            <person name="Kaine B.P."/>
            <person name="Borodovsky M."/>
            <person name="Klenk H.-P."/>
            <person name="Fraser C.M."/>
            <person name="Smith H.O."/>
            <person name="Woese C.R."/>
            <person name="Venter J.C."/>
        </authorList>
    </citation>
    <scope>NUCLEOTIDE SEQUENCE [LARGE SCALE GENOMIC DNA]</scope>
    <source>
        <strain>ATCC 43067 / DSM 2661 / JAL-1 / JCM 10045 / NBRC 100440</strain>
    </source>
</reference>
<reference key="2">
    <citation type="journal article" date="2002" name="Proc. Natl. Acad. Sci. U.S.A.">
        <title>Orthologs of a novel archaeal and of the bacterial peptidyl-tRNA hydrolase are nonessential in yeast.</title>
        <authorList>
            <person name="Rosas-Sandoval G."/>
            <person name="Ambrogelly A."/>
            <person name="Rinehart J."/>
            <person name="Wei D."/>
            <person name="Cruz-Vera L.R."/>
            <person name="Graham D.E."/>
            <person name="Stetter K.O."/>
            <person name="Guarneros G."/>
            <person name="Soell D."/>
        </authorList>
    </citation>
    <scope>PARTIAL PROTEIN SEQUENCE</scope>
    <scope>FUNCTION</scope>
    <scope>CHARACTERIZATION</scope>
</reference>
<keyword id="KW-0002">3D-structure</keyword>
<keyword id="KW-0963">Cytoplasm</keyword>
<keyword id="KW-0903">Direct protein sequencing</keyword>
<keyword id="KW-0378">Hydrolase</keyword>
<keyword id="KW-1185">Reference proteome</keyword>